<name>MRAY_LEPIN</name>
<keyword id="KW-0131">Cell cycle</keyword>
<keyword id="KW-0132">Cell division</keyword>
<keyword id="KW-0997">Cell inner membrane</keyword>
<keyword id="KW-1003">Cell membrane</keyword>
<keyword id="KW-0133">Cell shape</keyword>
<keyword id="KW-0961">Cell wall biogenesis/degradation</keyword>
<keyword id="KW-0460">Magnesium</keyword>
<keyword id="KW-0472">Membrane</keyword>
<keyword id="KW-0479">Metal-binding</keyword>
<keyword id="KW-0573">Peptidoglycan synthesis</keyword>
<keyword id="KW-1185">Reference proteome</keyword>
<keyword id="KW-0808">Transferase</keyword>
<keyword id="KW-0812">Transmembrane</keyword>
<keyword id="KW-1133">Transmembrane helix</keyword>
<gene>
    <name evidence="1" type="primary">mraY</name>
    <name type="synonym">mraY1</name>
    <name type="ordered locus">LA_2048</name>
</gene>
<comment type="function">
    <text evidence="1">Catalyzes the initial step of the lipid cycle reactions in the biosynthesis of the cell wall peptidoglycan: transfers peptidoglycan precursor phospho-MurNAc-pentapeptide from UDP-MurNAc-pentapeptide onto the lipid carrier undecaprenyl phosphate, yielding undecaprenyl-pyrophosphoryl-MurNAc-pentapeptide, known as lipid I.</text>
</comment>
<comment type="catalytic activity">
    <reaction evidence="1">
        <text>UDP-N-acetyl-alpha-D-muramoyl-L-alanyl-gamma-D-glutamyl-meso-2,6-diaminopimeloyl-D-alanyl-D-alanine + di-trans,octa-cis-undecaprenyl phosphate = di-trans,octa-cis-undecaprenyl diphospho-N-acetyl-alpha-D-muramoyl-L-alanyl-D-glutamyl-meso-2,6-diaminopimeloyl-D-alanyl-D-alanine + UMP</text>
        <dbReference type="Rhea" id="RHEA:28386"/>
        <dbReference type="ChEBI" id="CHEBI:57865"/>
        <dbReference type="ChEBI" id="CHEBI:60392"/>
        <dbReference type="ChEBI" id="CHEBI:61386"/>
        <dbReference type="ChEBI" id="CHEBI:61387"/>
        <dbReference type="EC" id="2.7.8.13"/>
    </reaction>
</comment>
<comment type="cofactor">
    <cofactor evidence="1">
        <name>Mg(2+)</name>
        <dbReference type="ChEBI" id="CHEBI:18420"/>
    </cofactor>
</comment>
<comment type="pathway">
    <text evidence="1">Cell wall biogenesis; peptidoglycan biosynthesis.</text>
</comment>
<comment type="subcellular location">
    <subcellularLocation>
        <location evidence="1">Cell inner membrane</location>
        <topology evidence="1">Multi-pass membrane protein</topology>
    </subcellularLocation>
</comment>
<comment type="similarity">
    <text evidence="1">Belongs to the glycosyltransferase 4 family. MraY subfamily.</text>
</comment>
<comment type="sequence caution" evidence="2">
    <conflict type="erroneous initiation">
        <sequence resource="EMBL-CDS" id="AAN49247"/>
    </conflict>
    <text>Truncated N-terminus.</text>
</comment>
<organism>
    <name type="scientific">Leptospira interrogans serogroup Icterohaemorrhagiae serovar Lai (strain 56601)</name>
    <dbReference type="NCBI Taxonomy" id="189518"/>
    <lineage>
        <taxon>Bacteria</taxon>
        <taxon>Pseudomonadati</taxon>
        <taxon>Spirochaetota</taxon>
        <taxon>Spirochaetia</taxon>
        <taxon>Leptospirales</taxon>
        <taxon>Leptospiraceae</taxon>
        <taxon>Leptospira</taxon>
    </lineage>
</organism>
<protein>
    <recommendedName>
        <fullName evidence="1">Phospho-N-acetylmuramoyl-pentapeptide-transferase</fullName>
        <ecNumber evidence="1">2.7.8.13</ecNumber>
    </recommendedName>
    <alternativeName>
        <fullName evidence="1">UDP-MurNAc-pentapeptide phosphotransferase</fullName>
    </alternativeName>
</protein>
<sequence>MFYYLYDLYFNHLDSLRIFSYVTFRALMAGLTSMLVTFWFGHKIIDFLYGLKFRESVRDDGPKSHEIKKGTPTMGGLLIIGSLLISVLLWGNLKNPNVILLSVFSLSFSVLGFADDYMKSVKKIKGGMRARTKFILSILISFIFCILFFYYTGTTGQTGKISFQLTDLFFPFIKGPVIALGIIAIPFSILVIIGSSHAVNLTDGLDGLATGTVLISVMTLGVIAYFSGTPIVANYLNIPYLPGAHEYSVFLSALTGALFGFLWFNAHPAQVFMGDTGSLFLGATLGMIVILLKKEILLLILGAIFVSEALSVILQVGSFKLTGKRIFKMAPLHHHFELGGLKETKIVIRFWIIAVILAIISLSTLKIQ</sequence>
<feature type="chain" id="PRO_0000108847" description="Phospho-N-acetylmuramoyl-pentapeptide-transferase">
    <location>
        <begin position="1"/>
        <end position="368"/>
    </location>
</feature>
<feature type="transmembrane region" description="Helical" evidence="1">
    <location>
        <begin position="31"/>
        <end position="51"/>
    </location>
</feature>
<feature type="transmembrane region" description="Helical" evidence="1">
    <location>
        <begin position="73"/>
        <end position="93"/>
    </location>
</feature>
<feature type="transmembrane region" description="Helical" evidence="1">
    <location>
        <begin position="98"/>
        <end position="118"/>
    </location>
</feature>
<feature type="transmembrane region" description="Helical" evidence="1">
    <location>
        <begin position="134"/>
        <end position="154"/>
    </location>
</feature>
<feature type="transmembrane region" description="Helical" evidence="1">
    <location>
        <begin position="175"/>
        <end position="195"/>
    </location>
</feature>
<feature type="transmembrane region" description="Helical" evidence="1">
    <location>
        <begin position="213"/>
        <end position="233"/>
    </location>
</feature>
<feature type="transmembrane region" description="Helical" evidence="1">
    <location>
        <begin position="249"/>
        <end position="269"/>
    </location>
</feature>
<feature type="transmembrane region" description="Helical" evidence="1">
    <location>
        <begin position="271"/>
        <end position="291"/>
    </location>
</feature>
<feature type="transmembrane region" description="Helical" evidence="1">
    <location>
        <begin position="296"/>
        <end position="316"/>
    </location>
</feature>
<feature type="transmembrane region" description="Helical" evidence="1">
    <location>
        <begin position="345"/>
        <end position="365"/>
    </location>
</feature>
<accession>Q8F4J3</accession>
<reference key="1">
    <citation type="journal article" date="2003" name="Nature">
        <title>Unique physiological and pathogenic features of Leptospira interrogans revealed by whole-genome sequencing.</title>
        <authorList>
            <person name="Ren S.-X."/>
            <person name="Fu G."/>
            <person name="Jiang X.-G."/>
            <person name="Zeng R."/>
            <person name="Miao Y.-G."/>
            <person name="Xu H."/>
            <person name="Zhang Y.-X."/>
            <person name="Xiong H."/>
            <person name="Lu G."/>
            <person name="Lu L.-F."/>
            <person name="Jiang H.-Q."/>
            <person name="Jia J."/>
            <person name="Tu Y.-F."/>
            <person name="Jiang J.-X."/>
            <person name="Gu W.-Y."/>
            <person name="Zhang Y.-Q."/>
            <person name="Cai Z."/>
            <person name="Sheng H.-H."/>
            <person name="Yin H.-F."/>
            <person name="Zhang Y."/>
            <person name="Zhu G.-F."/>
            <person name="Wan M."/>
            <person name="Huang H.-L."/>
            <person name="Qian Z."/>
            <person name="Wang S.-Y."/>
            <person name="Ma W."/>
            <person name="Yao Z.-J."/>
            <person name="Shen Y."/>
            <person name="Qiang B.-Q."/>
            <person name="Xia Q.-C."/>
            <person name="Guo X.-K."/>
            <person name="Danchin A."/>
            <person name="Saint Girons I."/>
            <person name="Somerville R.L."/>
            <person name="Wen Y.-M."/>
            <person name="Shi M.-H."/>
            <person name="Chen Z."/>
            <person name="Xu J.-G."/>
            <person name="Zhao G.-P."/>
        </authorList>
    </citation>
    <scope>NUCLEOTIDE SEQUENCE [LARGE SCALE GENOMIC DNA]</scope>
    <source>
        <strain>56601</strain>
    </source>
</reference>
<proteinExistence type="inferred from homology"/>
<evidence type="ECO:0000255" key="1">
    <source>
        <dbReference type="HAMAP-Rule" id="MF_00038"/>
    </source>
</evidence>
<evidence type="ECO:0000305" key="2"/>
<dbReference type="EC" id="2.7.8.13" evidence="1"/>
<dbReference type="EMBL" id="AE010300">
    <property type="protein sequence ID" value="AAN49247.2"/>
    <property type="status" value="ALT_INIT"/>
    <property type="molecule type" value="Genomic_DNA"/>
</dbReference>
<dbReference type="RefSeq" id="NP_712229.2">
    <property type="nucleotide sequence ID" value="NC_004342.2"/>
</dbReference>
<dbReference type="RefSeq" id="WP_000500387.1">
    <property type="nucleotide sequence ID" value="NC_004342.2"/>
</dbReference>
<dbReference type="SMR" id="Q8F4J3"/>
<dbReference type="FunCoup" id="Q8F4J3">
    <property type="interactions" value="338"/>
</dbReference>
<dbReference type="STRING" id="189518.LA_2048"/>
<dbReference type="TCDB" id="9.B.146.1.3">
    <property type="family name" value="the putative undecaprenyl-phosphate n-acetylglucosaminyl transferase (murg) family"/>
</dbReference>
<dbReference type="PaxDb" id="189518-LA_2048"/>
<dbReference type="EnsemblBacteria" id="AAN49247">
    <property type="protein sequence ID" value="AAN49247"/>
    <property type="gene ID" value="LA_2048"/>
</dbReference>
<dbReference type="GeneID" id="61141762"/>
<dbReference type="KEGG" id="lil:LA_2048"/>
<dbReference type="PATRIC" id="fig|189518.3.peg.2044"/>
<dbReference type="HOGENOM" id="CLU_023982_0_0_12"/>
<dbReference type="InParanoid" id="Q8F4J3"/>
<dbReference type="OrthoDB" id="9805475at2"/>
<dbReference type="UniPathway" id="UPA00219"/>
<dbReference type="Proteomes" id="UP000001408">
    <property type="component" value="Chromosome I"/>
</dbReference>
<dbReference type="GO" id="GO:0005886">
    <property type="term" value="C:plasma membrane"/>
    <property type="evidence" value="ECO:0000318"/>
    <property type="project" value="GO_Central"/>
</dbReference>
<dbReference type="GO" id="GO:0046872">
    <property type="term" value="F:metal ion binding"/>
    <property type="evidence" value="ECO:0007669"/>
    <property type="project" value="UniProtKB-KW"/>
</dbReference>
<dbReference type="GO" id="GO:0008963">
    <property type="term" value="F:phospho-N-acetylmuramoyl-pentapeptide-transferase activity"/>
    <property type="evidence" value="ECO:0007669"/>
    <property type="project" value="UniProtKB-UniRule"/>
</dbReference>
<dbReference type="GO" id="GO:0016780">
    <property type="term" value="F:phosphotransferase activity, for other substituted phosphate groups"/>
    <property type="evidence" value="ECO:0000318"/>
    <property type="project" value="GO_Central"/>
</dbReference>
<dbReference type="GO" id="GO:0051992">
    <property type="term" value="F:UDP-N-acetylmuramoyl-L-alanyl-D-glutamyl-meso-2,6-diaminopimelyl-D-alanyl-D-alanine:undecaprenyl-phosphate transferase activity"/>
    <property type="evidence" value="ECO:0007669"/>
    <property type="project" value="RHEA"/>
</dbReference>
<dbReference type="GO" id="GO:0051301">
    <property type="term" value="P:cell division"/>
    <property type="evidence" value="ECO:0007669"/>
    <property type="project" value="UniProtKB-KW"/>
</dbReference>
<dbReference type="GO" id="GO:0044038">
    <property type="term" value="P:cell wall macromolecule biosynthetic process"/>
    <property type="evidence" value="ECO:0000318"/>
    <property type="project" value="GO_Central"/>
</dbReference>
<dbReference type="GO" id="GO:0071555">
    <property type="term" value="P:cell wall organization"/>
    <property type="evidence" value="ECO:0000318"/>
    <property type="project" value="GO_Central"/>
</dbReference>
<dbReference type="GO" id="GO:0009252">
    <property type="term" value="P:peptidoglycan biosynthetic process"/>
    <property type="evidence" value="ECO:0007669"/>
    <property type="project" value="UniProtKB-UniRule"/>
</dbReference>
<dbReference type="GO" id="GO:0008360">
    <property type="term" value="P:regulation of cell shape"/>
    <property type="evidence" value="ECO:0007669"/>
    <property type="project" value="UniProtKB-KW"/>
</dbReference>
<dbReference type="CDD" id="cd06852">
    <property type="entry name" value="GT_MraY"/>
    <property type="match status" value="1"/>
</dbReference>
<dbReference type="HAMAP" id="MF_00038">
    <property type="entry name" value="MraY"/>
    <property type="match status" value="1"/>
</dbReference>
<dbReference type="InterPro" id="IPR000715">
    <property type="entry name" value="Glycosyl_transferase_4"/>
</dbReference>
<dbReference type="InterPro" id="IPR003524">
    <property type="entry name" value="PNAcMuramoyl-5peptid_Trfase"/>
</dbReference>
<dbReference type="InterPro" id="IPR018480">
    <property type="entry name" value="PNAcMuramoyl-5peptid_Trfase_CS"/>
</dbReference>
<dbReference type="NCBIfam" id="TIGR00445">
    <property type="entry name" value="mraY"/>
    <property type="match status" value="1"/>
</dbReference>
<dbReference type="PANTHER" id="PTHR22926">
    <property type="entry name" value="PHOSPHO-N-ACETYLMURAMOYL-PENTAPEPTIDE-TRANSFERASE"/>
    <property type="match status" value="1"/>
</dbReference>
<dbReference type="PANTHER" id="PTHR22926:SF5">
    <property type="entry name" value="PHOSPHO-N-ACETYLMURAMOYL-PENTAPEPTIDE-TRANSFERASE HOMOLOG"/>
    <property type="match status" value="1"/>
</dbReference>
<dbReference type="Pfam" id="PF00953">
    <property type="entry name" value="Glycos_transf_4"/>
    <property type="match status" value="1"/>
</dbReference>
<dbReference type="Pfam" id="PF10555">
    <property type="entry name" value="MraY_sig1"/>
    <property type="match status" value="1"/>
</dbReference>
<dbReference type="PROSITE" id="PS01347">
    <property type="entry name" value="MRAY_1"/>
    <property type="match status" value="1"/>
</dbReference>
<dbReference type="PROSITE" id="PS01348">
    <property type="entry name" value="MRAY_2"/>
    <property type="match status" value="1"/>
</dbReference>